<sequence length="383" mass="41531">MRMMVAGGGTGGHVFPGIALAEEVVTRHPANDVVFVGTARGLEASVVPAAGFPIELIEVKGLKGKGIAGALLNLLLLPRAFLQSWRILRRWRPDVVVGVGGYASGPVVLTAWAMRIPTAVQEQNAIAGLTNRLLGRVVKAAFTAFPEAARHFAARKVYQLGNPIRRRLMENYMRPESAHGQPRLLVFGGSQGAHALNMRVIEALPHLADLRERIQITHQTGARDREYVEKGYRACGFTPDVREFIDDMSAAYAGCDLVVCRAGATTLAELTVCKKPSILVPFPAAADNHQVKNARSLVDAGAAVMIEERDLTGEVLAREIREILDAPERRERMARAAGRLGSPQAAKEIADVCMELVRRRWGSPFGQAREPGQKPARPPDPAS</sequence>
<feature type="chain" id="PRO_1000117001" description="UDP-N-acetylglucosamine--N-acetylmuramyl-(pentapeptide) pyrophosphoryl-undecaprenol N-acetylglucosamine transferase">
    <location>
        <begin position="1"/>
        <end position="383"/>
    </location>
</feature>
<feature type="region of interest" description="Disordered" evidence="2">
    <location>
        <begin position="363"/>
        <end position="383"/>
    </location>
</feature>
<feature type="binding site" evidence="1">
    <location>
        <begin position="10"/>
        <end position="12"/>
    </location>
    <ligand>
        <name>UDP-N-acetyl-alpha-D-glucosamine</name>
        <dbReference type="ChEBI" id="CHEBI:57705"/>
    </ligand>
</feature>
<feature type="binding site" evidence="1">
    <location>
        <position position="124"/>
    </location>
    <ligand>
        <name>UDP-N-acetyl-alpha-D-glucosamine</name>
        <dbReference type="ChEBI" id="CHEBI:57705"/>
    </ligand>
</feature>
<feature type="binding site" evidence="1">
    <location>
        <position position="165"/>
    </location>
    <ligand>
        <name>UDP-N-acetyl-alpha-D-glucosamine</name>
        <dbReference type="ChEBI" id="CHEBI:57705"/>
    </ligand>
</feature>
<feature type="binding site" evidence="1">
    <location>
        <position position="190"/>
    </location>
    <ligand>
        <name>UDP-N-acetyl-alpha-D-glucosamine</name>
        <dbReference type="ChEBI" id="CHEBI:57705"/>
    </ligand>
</feature>
<feature type="binding site" evidence="1">
    <location>
        <position position="245"/>
    </location>
    <ligand>
        <name>UDP-N-acetyl-alpha-D-glucosamine</name>
        <dbReference type="ChEBI" id="CHEBI:57705"/>
    </ligand>
</feature>
<feature type="binding site" evidence="1">
    <location>
        <position position="290"/>
    </location>
    <ligand>
        <name>UDP-N-acetyl-alpha-D-glucosamine</name>
        <dbReference type="ChEBI" id="CHEBI:57705"/>
    </ligand>
</feature>
<dbReference type="EC" id="2.4.1.227" evidence="1"/>
<dbReference type="EMBL" id="CP001359">
    <property type="protein sequence ID" value="ACL67234.1"/>
    <property type="molecule type" value="Genomic_DNA"/>
</dbReference>
<dbReference type="RefSeq" id="WP_015934966.1">
    <property type="nucleotide sequence ID" value="NC_011891.1"/>
</dbReference>
<dbReference type="SMR" id="B8J8E8"/>
<dbReference type="CAZy" id="GT28">
    <property type="family name" value="Glycosyltransferase Family 28"/>
</dbReference>
<dbReference type="KEGG" id="acp:A2cp1_3911"/>
<dbReference type="HOGENOM" id="CLU_037404_0_1_7"/>
<dbReference type="UniPathway" id="UPA00219"/>
<dbReference type="Proteomes" id="UP000007089">
    <property type="component" value="Chromosome"/>
</dbReference>
<dbReference type="GO" id="GO:0005886">
    <property type="term" value="C:plasma membrane"/>
    <property type="evidence" value="ECO:0007669"/>
    <property type="project" value="UniProtKB-SubCell"/>
</dbReference>
<dbReference type="GO" id="GO:0051991">
    <property type="term" value="F:UDP-N-acetyl-D-glucosamine:N-acetylmuramoyl-L-alanyl-D-glutamyl-meso-2,6-diaminopimelyl-D-alanyl-D-alanine-diphosphoundecaprenol 4-beta-N-acetylglucosaminlytransferase activity"/>
    <property type="evidence" value="ECO:0007669"/>
    <property type="project" value="RHEA"/>
</dbReference>
<dbReference type="GO" id="GO:0050511">
    <property type="term" value="F:undecaprenyldiphospho-muramoylpentapeptide beta-N-acetylglucosaminyltransferase activity"/>
    <property type="evidence" value="ECO:0007669"/>
    <property type="project" value="UniProtKB-UniRule"/>
</dbReference>
<dbReference type="GO" id="GO:0005975">
    <property type="term" value="P:carbohydrate metabolic process"/>
    <property type="evidence" value="ECO:0007669"/>
    <property type="project" value="InterPro"/>
</dbReference>
<dbReference type="GO" id="GO:0051301">
    <property type="term" value="P:cell division"/>
    <property type="evidence" value="ECO:0007669"/>
    <property type="project" value="UniProtKB-KW"/>
</dbReference>
<dbReference type="GO" id="GO:0071555">
    <property type="term" value="P:cell wall organization"/>
    <property type="evidence" value="ECO:0007669"/>
    <property type="project" value="UniProtKB-KW"/>
</dbReference>
<dbReference type="GO" id="GO:0030259">
    <property type="term" value="P:lipid glycosylation"/>
    <property type="evidence" value="ECO:0007669"/>
    <property type="project" value="UniProtKB-UniRule"/>
</dbReference>
<dbReference type="GO" id="GO:0009252">
    <property type="term" value="P:peptidoglycan biosynthetic process"/>
    <property type="evidence" value="ECO:0007669"/>
    <property type="project" value="UniProtKB-UniRule"/>
</dbReference>
<dbReference type="GO" id="GO:0008360">
    <property type="term" value="P:regulation of cell shape"/>
    <property type="evidence" value="ECO:0007669"/>
    <property type="project" value="UniProtKB-KW"/>
</dbReference>
<dbReference type="CDD" id="cd03785">
    <property type="entry name" value="GT28_MurG"/>
    <property type="match status" value="1"/>
</dbReference>
<dbReference type="Gene3D" id="3.40.50.2000">
    <property type="entry name" value="Glycogen Phosphorylase B"/>
    <property type="match status" value="2"/>
</dbReference>
<dbReference type="HAMAP" id="MF_00033">
    <property type="entry name" value="MurG"/>
    <property type="match status" value="1"/>
</dbReference>
<dbReference type="InterPro" id="IPR006009">
    <property type="entry name" value="GlcNAc_MurG"/>
</dbReference>
<dbReference type="InterPro" id="IPR007235">
    <property type="entry name" value="Glyco_trans_28_C"/>
</dbReference>
<dbReference type="InterPro" id="IPR004276">
    <property type="entry name" value="GlycoTrans_28_N"/>
</dbReference>
<dbReference type="NCBIfam" id="TIGR01133">
    <property type="entry name" value="murG"/>
    <property type="match status" value="1"/>
</dbReference>
<dbReference type="PANTHER" id="PTHR21015:SF22">
    <property type="entry name" value="GLYCOSYLTRANSFERASE"/>
    <property type="match status" value="1"/>
</dbReference>
<dbReference type="PANTHER" id="PTHR21015">
    <property type="entry name" value="UDP-N-ACETYLGLUCOSAMINE--N-ACETYLMURAMYL-(PENTAPEPTIDE) PYROPHOSPHORYL-UNDECAPRENOL N-ACETYLGLUCOSAMINE TRANSFERASE 1"/>
    <property type="match status" value="1"/>
</dbReference>
<dbReference type="Pfam" id="PF04101">
    <property type="entry name" value="Glyco_tran_28_C"/>
    <property type="match status" value="1"/>
</dbReference>
<dbReference type="Pfam" id="PF03033">
    <property type="entry name" value="Glyco_transf_28"/>
    <property type="match status" value="1"/>
</dbReference>
<dbReference type="SUPFAM" id="SSF53756">
    <property type="entry name" value="UDP-Glycosyltransferase/glycogen phosphorylase"/>
    <property type="match status" value="1"/>
</dbReference>
<keyword id="KW-0131">Cell cycle</keyword>
<keyword id="KW-0132">Cell division</keyword>
<keyword id="KW-0997">Cell inner membrane</keyword>
<keyword id="KW-1003">Cell membrane</keyword>
<keyword id="KW-0133">Cell shape</keyword>
<keyword id="KW-0961">Cell wall biogenesis/degradation</keyword>
<keyword id="KW-0328">Glycosyltransferase</keyword>
<keyword id="KW-0472">Membrane</keyword>
<keyword id="KW-0573">Peptidoglycan synthesis</keyword>
<keyword id="KW-0808">Transferase</keyword>
<evidence type="ECO:0000255" key="1">
    <source>
        <dbReference type="HAMAP-Rule" id="MF_00033"/>
    </source>
</evidence>
<evidence type="ECO:0000256" key="2">
    <source>
        <dbReference type="SAM" id="MobiDB-lite"/>
    </source>
</evidence>
<gene>
    <name evidence="1" type="primary">murG</name>
    <name type="ordered locus">A2cp1_3911</name>
</gene>
<accession>B8J8E8</accession>
<protein>
    <recommendedName>
        <fullName evidence="1">UDP-N-acetylglucosamine--N-acetylmuramyl-(pentapeptide) pyrophosphoryl-undecaprenol N-acetylglucosamine transferase</fullName>
        <ecNumber evidence="1">2.4.1.227</ecNumber>
    </recommendedName>
    <alternativeName>
        <fullName evidence="1">Undecaprenyl-PP-MurNAc-pentapeptide-UDPGlcNAc GlcNAc transferase</fullName>
    </alternativeName>
</protein>
<proteinExistence type="inferred from homology"/>
<comment type="function">
    <text evidence="1">Cell wall formation. Catalyzes the transfer of a GlcNAc subunit on undecaprenyl-pyrophosphoryl-MurNAc-pentapeptide (lipid intermediate I) to form undecaprenyl-pyrophosphoryl-MurNAc-(pentapeptide)GlcNAc (lipid intermediate II).</text>
</comment>
<comment type="catalytic activity">
    <reaction evidence="1">
        <text>di-trans,octa-cis-undecaprenyl diphospho-N-acetyl-alpha-D-muramoyl-L-alanyl-D-glutamyl-meso-2,6-diaminopimeloyl-D-alanyl-D-alanine + UDP-N-acetyl-alpha-D-glucosamine = di-trans,octa-cis-undecaprenyl diphospho-[N-acetyl-alpha-D-glucosaminyl-(1-&gt;4)]-N-acetyl-alpha-D-muramoyl-L-alanyl-D-glutamyl-meso-2,6-diaminopimeloyl-D-alanyl-D-alanine + UDP + H(+)</text>
        <dbReference type="Rhea" id="RHEA:31227"/>
        <dbReference type="ChEBI" id="CHEBI:15378"/>
        <dbReference type="ChEBI" id="CHEBI:57705"/>
        <dbReference type="ChEBI" id="CHEBI:58223"/>
        <dbReference type="ChEBI" id="CHEBI:61387"/>
        <dbReference type="ChEBI" id="CHEBI:61388"/>
        <dbReference type="EC" id="2.4.1.227"/>
    </reaction>
</comment>
<comment type="pathway">
    <text evidence="1">Cell wall biogenesis; peptidoglycan biosynthesis.</text>
</comment>
<comment type="subcellular location">
    <subcellularLocation>
        <location evidence="1">Cell inner membrane</location>
        <topology evidence="1">Peripheral membrane protein</topology>
        <orientation evidence="1">Cytoplasmic side</orientation>
    </subcellularLocation>
</comment>
<comment type="similarity">
    <text evidence="1">Belongs to the glycosyltransferase 28 family. MurG subfamily.</text>
</comment>
<reference key="1">
    <citation type="submission" date="2009-01" db="EMBL/GenBank/DDBJ databases">
        <title>Complete sequence of Anaeromyxobacter dehalogenans 2CP-1.</title>
        <authorList>
            <person name="Lucas S."/>
            <person name="Copeland A."/>
            <person name="Lapidus A."/>
            <person name="Glavina del Rio T."/>
            <person name="Dalin E."/>
            <person name="Tice H."/>
            <person name="Bruce D."/>
            <person name="Goodwin L."/>
            <person name="Pitluck S."/>
            <person name="Saunders E."/>
            <person name="Brettin T."/>
            <person name="Detter J.C."/>
            <person name="Han C."/>
            <person name="Larimer F."/>
            <person name="Land M."/>
            <person name="Hauser L."/>
            <person name="Kyrpides N."/>
            <person name="Ovchinnikova G."/>
            <person name="Beliaev A.S."/>
            <person name="Richardson P."/>
        </authorList>
    </citation>
    <scope>NUCLEOTIDE SEQUENCE [LARGE SCALE GENOMIC DNA]</scope>
    <source>
        <strain>2CP-1 / ATCC BAA-258</strain>
    </source>
</reference>
<organism>
    <name type="scientific">Anaeromyxobacter dehalogenans (strain 2CP-1 / ATCC BAA-258)</name>
    <dbReference type="NCBI Taxonomy" id="455488"/>
    <lineage>
        <taxon>Bacteria</taxon>
        <taxon>Pseudomonadati</taxon>
        <taxon>Myxococcota</taxon>
        <taxon>Myxococcia</taxon>
        <taxon>Myxococcales</taxon>
        <taxon>Cystobacterineae</taxon>
        <taxon>Anaeromyxobacteraceae</taxon>
        <taxon>Anaeromyxobacter</taxon>
    </lineage>
</organism>
<name>MURG_ANAD2</name>